<proteinExistence type="inferred from homology"/>
<name>PSF2_COCIM</name>
<keyword id="KW-0159">Chromosome partition</keyword>
<keyword id="KW-0235">DNA replication</keyword>
<keyword id="KW-0539">Nucleus</keyword>
<keyword id="KW-1185">Reference proteome</keyword>
<protein>
    <recommendedName>
        <fullName>DNA replication complex GINS protein PSF2</fullName>
    </recommendedName>
</protein>
<dbReference type="EMBL" id="GG704913">
    <property type="protein sequence ID" value="EAS29236.3"/>
    <property type="molecule type" value="Genomic_DNA"/>
</dbReference>
<dbReference type="RefSeq" id="XP_001240819.1">
    <property type="nucleotide sequence ID" value="XM_001240818.2"/>
</dbReference>
<dbReference type="SMR" id="Q1DNY1"/>
<dbReference type="FunCoup" id="Q1DNY1">
    <property type="interactions" value="668"/>
</dbReference>
<dbReference type="STRING" id="246410.Q1DNY1"/>
<dbReference type="GeneID" id="4559422"/>
<dbReference type="KEGG" id="cim:CIMG_07982"/>
<dbReference type="VEuPathDB" id="FungiDB:CIMG_07982"/>
<dbReference type="InParanoid" id="Q1DNY1"/>
<dbReference type="OMA" id="DSLNCMY"/>
<dbReference type="OrthoDB" id="1938138at2759"/>
<dbReference type="Proteomes" id="UP000001261">
    <property type="component" value="Unassembled WGS sequence"/>
</dbReference>
<dbReference type="GO" id="GO:0000811">
    <property type="term" value="C:GINS complex"/>
    <property type="evidence" value="ECO:0007669"/>
    <property type="project" value="TreeGrafter"/>
</dbReference>
<dbReference type="GO" id="GO:0007059">
    <property type="term" value="P:chromosome segregation"/>
    <property type="evidence" value="ECO:0007669"/>
    <property type="project" value="UniProtKB-KW"/>
</dbReference>
<dbReference type="GO" id="GO:0006260">
    <property type="term" value="P:DNA replication"/>
    <property type="evidence" value="ECO:0007669"/>
    <property type="project" value="UniProtKB-KW"/>
</dbReference>
<dbReference type="GO" id="GO:0000727">
    <property type="term" value="P:double-strand break repair via break-induced replication"/>
    <property type="evidence" value="ECO:0007669"/>
    <property type="project" value="TreeGrafter"/>
</dbReference>
<dbReference type="CDD" id="cd11712">
    <property type="entry name" value="GINS_A_psf2"/>
    <property type="match status" value="1"/>
</dbReference>
<dbReference type="CDD" id="cd21694">
    <property type="entry name" value="GINS_B_Psf2"/>
    <property type="match status" value="1"/>
</dbReference>
<dbReference type="FunFam" id="1.20.58.1020:FF:000001">
    <property type="entry name" value="DNA replication complex GINS protein PSF2"/>
    <property type="match status" value="1"/>
</dbReference>
<dbReference type="FunFam" id="3.40.5.50:FF:000001">
    <property type="entry name" value="DNA replication complex GINS protein PSF2"/>
    <property type="match status" value="1"/>
</dbReference>
<dbReference type="Gene3D" id="1.20.58.1020">
    <property type="match status" value="1"/>
</dbReference>
<dbReference type="Gene3D" id="3.40.5.50">
    <property type="match status" value="1"/>
</dbReference>
<dbReference type="InterPro" id="IPR021151">
    <property type="entry name" value="GINS_A"/>
</dbReference>
<dbReference type="InterPro" id="IPR036224">
    <property type="entry name" value="GINS_bundle-like_dom_sf"/>
</dbReference>
<dbReference type="InterPro" id="IPR007257">
    <property type="entry name" value="GINS_Psf2"/>
</dbReference>
<dbReference type="InterPro" id="IPR056784">
    <property type="entry name" value="PSF2_N"/>
</dbReference>
<dbReference type="PANTHER" id="PTHR12772">
    <property type="entry name" value="DNA REPLICATION COMPLEX GINS PROTEIN PSF2"/>
    <property type="match status" value="1"/>
</dbReference>
<dbReference type="PANTHER" id="PTHR12772:SF0">
    <property type="entry name" value="DNA REPLICATION COMPLEX GINS PROTEIN PSF2"/>
    <property type="match status" value="1"/>
</dbReference>
<dbReference type="Pfam" id="PF25005">
    <property type="entry name" value="PSF2_N"/>
    <property type="match status" value="1"/>
</dbReference>
<dbReference type="Pfam" id="PF05916">
    <property type="entry name" value="Sld5"/>
    <property type="match status" value="1"/>
</dbReference>
<dbReference type="PIRSF" id="PIRSF028998">
    <property type="entry name" value="GINS_Psf2_subgr"/>
    <property type="match status" value="1"/>
</dbReference>
<dbReference type="SUPFAM" id="SSF158573">
    <property type="entry name" value="GINS helical bundle-like"/>
    <property type="match status" value="1"/>
</dbReference>
<dbReference type="SUPFAM" id="SSF160059">
    <property type="entry name" value="PriA/YqbF domain"/>
    <property type="match status" value="1"/>
</dbReference>
<feature type="chain" id="PRO_0000278409" description="DNA replication complex GINS protein PSF2">
    <location>
        <begin position="1"/>
        <end position="268"/>
    </location>
</feature>
<feature type="region of interest" description="Disordered" evidence="2">
    <location>
        <begin position="245"/>
        <end position="268"/>
    </location>
</feature>
<feature type="compositionally biased region" description="Basic and acidic residues" evidence="2">
    <location>
        <begin position="245"/>
        <end position="259"/>
    </location>
</feature>
<reference key="1">
    <citation type="journal article" date="2009" name="Genome Res.">
        <title>Comparative genomic analyses of the human fungal pathogens Coccidioides and their relatives.</title>
        <authorList>
            <person name="Sharpton T.J."/>
            <person name="Stajich J.E."/>
            <person name="Rounsley S.D."/>
            <person name="Gardner M.J."/>
            <person name="Wortman J.R."/>
            <person name="Jordar V.S."/>
            <person name="Maiti R."/>
            <person name="Kodira C.D."/>
            <person name="Neafsey D.E."/>
            <person name="Zeng Q."/>
            <person name="Hung C.-Y."/>
            <person name="McMahan C."/>
            <person name="Muszewska A."/>
            <person name="Grynberg M."/>
            <person name="Mandel M.A."/>
            <person name="Kellner E.M."/>
            <person name="Barker B.M."/>
            <person name="Galgiani J.N."/>
            <person name="Orbach M.J."/>
            <person name="Kirkland T.N."/>
            <person name="Cole G.T."/>
            <person name="Henn M.R."/>
            <person name="Birren B.W."/>
            <person name="Taylor J.W."/>
        </authorList>
    </citation>
    <scope>NUCLEOTIDE SEQUENCE [LARGE SCALE GENOMIC DNA]</scope>
    <source>
        <strain>RS</strain>
    </source>
</reference>
<reference key="2">
    <citation type="journal article" date="2010" name="Genome Res.">
        <title>Population genomic sequencing of Coccidioides fungi reveals recent hybridization and transposon control.</title>
        <authorList>
            <person name="Neafsey D.E."/>
            <person name="Barker B.M."/>
            <person name="Sharpton T.J."/>
            <person name="Stajich J.E."/>
            <person name="Park D.J."/>
            <person name="Whiston E."/>
            <person name="Hung C.-Y."/>
            <person name="McMahan C."/>
            <person name="White J."/>
            <person name="Sykes S."/>
            <person name="Heiman D."/>
            <person name="Young S."/>
            <person name="Zeng Q."/>
            <person name="Abouelleil A."/>
            <person name="Aftuck L."/>
            <person name="Bessette D."/>
            <person name="Brown A."/>
            <person name="FitzGerald M."/>
            <person name="Lui A."/>
            <person name="Macdonald J.P."/>
            <person name="Priest M."/>
            <person name="Orbach M.J."/>
            <person name="Galgiani J.N."/>
            <person name="Kirkland T.N."/>
            <person name="Cole G.T."/>
            <person name="Birren B.W."/>
            <person name="Henn M.R."/>
            <person name="Taylor J.W."/>
            <person name="Rounsley S.D."/>
        </authorList>
    </citation>
    <scope>GENOME REANNOTATION</scope>
    <source>
        <strain>RS</strain>
    </source>
</reference>
<organism>
    <name type="scientific">Coccidioides immitis (strain RS)</name>
    <name type="common">Valley fever fungus</name>
    <dbReference type="NCBI Taxonomy" id="246410"/>
    <lineage>
        <taxon>Eukaryota</taxon>
        <taxon>Fungi</taxon>
        <taxon>Dikarya</taxon>
        <taxon>Ascomycota</taxon>
        <taxon>Pezizomycotina</taxon>
        <taxon>Eurotiomycetes</taxon>
        <taxon>Eurotiomycetidae</taxon>
        <taxon>Onygenales</taxon>
        <taxon>Onygenaceae</taxon>
        <taxon>Coccidioides</taxon>
    </lineage>
</organism>
<comment type="function">
    <text evidence="1">The GINS complex plays an essential role in the initiation of DNA replication. Has a role in chromosome segregation (By similarity).</text>
</comment>
<comment type="subunit">
    <text evidence="1">Component of the GINS complex which is a heterotetramer of SLD5, PSF1, PSF2 and PSF3.</text>
</comment>
<comment type="subcellular location">
    <subcellularLocation>
        <location evidence="1">Nucleus</location>
    </subcellularLocation>
</comment>
<comment type="similarity">
    <text evidence="3">Belongs to the GINS2/PSF2 family.</text>
</comment>
<sequence length="268" mass="30128">MAFPLPRGVTPSEITFLCEMEMVTIVPRQRLEGLELLGGPTEPLIPPRRSSLPLWLALLLKRQRRANILPPPWLNTEWLSEFLKAETDHDVFLPPPPLDCASYTGSVARRDARRSGHSGPRRTLDGQRYIPSAPFLLQNVVDDESTAPRNPWLPYHWLELATMLLETASDDLVEPDQIRRIIRDIREIRMAKMRKFTEYVDATAIGGGEGLPLTGVGAMEIGEARGFMSGAAETLRQIGASKEEALREQAEAGDDLRNDYDEDDEMEL</sequence>
<evidence type="ECO:0000250" key="1"/>
<evidence type="ECO:0000256" key="2">
    <source>
        <dbReference type="SAM" id="MobiDB-lite"/>
    </source>
</evidence>
<evidence type="ECO:0000305" key="3"/>
<accession>Q1DNY1</accession>
<accession>J3K586</accession>
<gene>
    <name type="primary">PSF2</name>
    <name type="ORF">CIMG_07982</name>
</gene>